<feature type="chain" id="PRO_0000442724" description="NAC domain-containing protein 22">
    <location>
        <begin position="1"/>
        <end position="316"/>
    </location>
</feature>
<feature type="domain" description="NAC" evidence="1">
    <location>
        <begin position="17"/>
        <end position="170"/>
    </location>
</feature>
<feature type="DNA-binding region" evidence="1">
    <location>
        <begin position="117"/>
        <end position="176"/>
    </location>
</feature>
<feature type="region of interest" description="Disordered" evidence="2">
    <location>
        <begin position="229"/>
        <end position="260"/>
    </location>
</feature>
<feature type="compositionally biased region" description="Low complexity" evidence="2">
    <location>
        <begin position="230"/>
        <end position="244"/>
    </location>
</feature>
<evidence type="ECO:0000255" key="1">
    <source>
        <dbReference type="PROSITE-ProRule" id="PRU00353"/>
    </source>
</evidence>
<evidence type="ECO:0000256" key="2">
    <source>
        <dbReference type="SAM" id="MobiDB-lite"/>
    </source>
</evidence>
<evidence type="ECO:0000269" key="3">
    <source>
    </source>
</evidence>
<evidence type="ECO:0000303" key="4">
    <source>
    </source>
</evidence>
<evidence type="ECO:0000312" key="5">
    <source>
        <dbReference type="EMBL" id="ABF93829.1"/>
    </source>
</evidence>
<evidence type="ECO:0000312" key="6">
    <source>
        <dbReference type="EMBL" id="BAF10786.1"/>
    </source>
</evidence>
<evidence type="ECO:0000312" key="7">
    <source>
        <dbReference type="EMBL" id="EAZ25483.1"/>
    </source>
</evidence>
<proteinExistence type="evidence at transcript level"/>
<name>NAC22_ORYSJ</name>
<protein>
    <recommendedName>
        <fullName evidence="4">NAC domain-containing protein 22</fullName>
        <shortName evidence="4">ONAC022</shortName>
    </recommendedName>
</protein>
<organism evidence="5">
    <name type="scientific">Oryza sativa subsp. japonica</name>
    <name type="common">Rice</name>
    <dbReference type="NCBI Taxonomy" id="39947"/>
    <lineage>
        <taxon>Eukaryota</taxon>
        <taxon>Viridiplantae</taxon>
        <taxon>Streptophyta</taxon>
        <taxon>Embryophyta</taxon>
        <taxon>Tracheophyta</taxon>
        <taxon>Spermatophyta</taxon>
        <taxon>Magnoliopsida</taxon>
        <taxon>Liliopsida</taxon>
        <taxon>Poales</taxon>
        <taxon>Poaceae</taxon>
        <taxon>BOP clade</taxon>
        <taxon>Oryzoideae</taxon>
        <taxon>Oryzeae</taxon>
        <taxon>Oryzinae</taxon>
        <taxon>Oryza</taxon>
        <taxon>Oryza sativa</taxon>
    </lineage>
</organism>
<keyword id="KW-0238">DNA-binding</keyword>
<keyword id="KW-0539">Nucleus</keyword>
<keyword id="KW-1185">Reference proteome</keyword>
<keyword id="KW-0346">Stress response</keyword>
<keyword id="KW-0804">Transcription</keyword>
<keyword id="KW-0805">Transcription regulation</keyword>
<dbReference type="EMBL" id="DP000009">
    <property type="protein sequence ID" value="ABF93829.1"/>
    <property type="molecule type" value="Genomic_DNA"/>
</dbReference>
<dbReference type="EMBL" id="AP008209">
    <property type="protein sequence ID" value="BAF10786.1"/>
    <property type="molecule type" value="Genomic_DNA"/>
</dbReference>
<dbReference type="EMBL" id="AP014959">
    <property type="protein sequence ID" value="BAS82155.1"/>
    <property type="molecule type" value="Genomic_DNA"/>
</dbReference>
<dbReference type="EMBL" id="CM000140">
    <property type="protein sequence ID" value="EAZ25483.1"/>
    <property type="molecule type" value="Genomic_DNA"/>
</dbReference>
<dbReference type="SMR" id="Q10S65"/>
<dbReference type="FunCoup" id="Q10S65">
    <property type="interactions" value="927"/>
</dbReference>
<dbReference type="STRING" id="39947.Q10S65"/>
<dbReference type="PaxDb" id="39947-Q10S65"/>
<dbReference type="EnsemblPlants" id="Os03t0133000-01">
    <property type="protein sequence ID" value="Os03t0133000-01"/>
    <property type="gene ID" value="Os03g0133000"/>
</dbReference>
<dbReference type="Gramene" id="Os03t0133000-01">
    <property type="protein sequence ID" value="Os03t0133000-01"/>
    <property type="gene ID" value="Os03g0133000"/>
</dbReference>
<dbReference type="KEGG" id="dosa:Os03g0133000"/>
<dbReference type="KEGG" id="osa:4331520"/>
<dbReference type="eggNOG" id="ENOG502QUZY">
    <property type="taxonomic scope" value="Eukaryota"/>
</dbReference>
<dbReference type="HOGENOM" id="CLU_035664_7_0_1"/>
<dbReference type="InParanoid" id="Q10S65"/>
<dbReference type="OMA" id="NCECELM"/>
<dbReference type="OrthoDB" id="1880352at2759"/>
<dbReference type="Proteomes" id="UP000000763">
    <property type="component" value="Chromosome 3"/>
</dbReference>
<dbReference type="Proteomes" id="UP000007752">
    <property type="component" value="Chromosome 3"/>
</dbReference>
<dbReference type="Proteomes" id="UP000059680">
    <property type="component" value="Chromosome 3"/>
</dbReference>
<dbReference type="GO" id="GO:0005634">
    <property type="term" value="C:nucleus"/>
    <property type="evidence" value="ECO:0000314"/>
    <property type="project" value="UniProtKB"/>
</dbReference>
<dbReference type="GO" id="GO:0043565">
    <property type="term" value="F:sequence-specific DNA binding"/>
    <property type="evidence" value="ECO:0000314"/>
    <property type="project" value="UniProtKB"/>
</dbReference>
<dbReference type="GO" id="GO:0045893">
    <property type="term" value="P:positive regulation of DNA-templated transcription"/>
    <property type="evidence" value="ECO:0000314"/>
    <property type="project" value="UniProtKB"/>
</dbReference>
<dbReference type="GO" id="GO:1901002">
    <property type="term" value="P:positive regulation of response to salt stress"/>
    <property type="evidence" value="ECO:0000315"/>
    <property type="project" value="UniProtKB"/>
</dbReference>
<dbReference type="GO" id="GO:1902584">
    <property type="term" value="P:positive regulation of response to water deprivation"/>
    <property type="evidence" value="ECO:0000315"/>
    <property type="project" value="UniProtKB"/>
</dbReference>
<dbReference type="FunFam" id="2.170.150.80:FF:000010">
    <property type="entry name" value="NAC domain-containing protein 67-like"/>
    <property type="match status" value="1"/>
</dbReference>
<dbReference type="Gene3D" id="2.170.150.80">
    <property type="entry name" value="NAC domain"/>
    <property type="match status" value="1"/>
</dbReference>
<dbReference type="InterPro" id="IPR003441">
    <property type="entry name" value="NAC-dom"/>
</dbReference>
<dbReference type="InterPro" id="IPR036093">
    <property type="entry name" value="NAC_dom_sf"/>
</dbReference>
<dbReference type="PANTHER" id="PTHR31744:SF79">
    <property type="entry name" value="NAC DOMAIN-CONTAINING PROTEIN"/>
    <property type="match status" value="1"/>
</dbReference>
<dbReference type="PANTHER" id="PTHR31744">
    <property type="entry name" value="PROTEIN CUP-SHAPED COTYLEDON 2-RELATED"/>
    <property type="match status" value="1"/>
</dbReference>
<dbReference type="Pfam" id="PF02365">
    <property type="entry name" value="NAM"/>
    <property type="match status" value="1"/>
</dbReference>
<dbReference type="SUPFAM" id="SSF101941">
    <property type="entry name" value="NAC domain"/>
    <property type="match status" value="1"/>
</dbReference>
<dbReference type="PROSITE" id="PS51005">
    <property type="entry name" value="NAC"/>
    <property type="match status" value="1"/>
</dbReference>
<accession>Q10S65</accession>
<sequence>MAAAVAVAGPSMEVEQDLPGFRFHPTEEELLDFYLSRVVLGKKLHFNIIGTLNIYRHDPWDLPGMAKIGEREWYFFVPRDRKAGNGGRPNRTTERGFWKATGSDRAIRSSGDPKRVIGLKKTLVFYQGRAPRGTKTDWVMNEYRLPDYGAARAAAPPPKEDMVLCKIYRKATPLKELEQRASAMEEMQRGSSHGDYTATRASLVHDASASTGDDYFSSDDVHDSGFLIQSSSSSAAPSGSSSKNGGAGAPREAKKEEADVTVTVASATSLQLPAVSQLPSLQLPAMDWLQDPFLTQLRSPWQDQHCLSPYAHLLYY</sequence>
<gene>
    <name evidence="4" type="primary">NAC022</name>
    <name evidence="6" type="ordered locus">Os03g0133000</name>
    <name evidence="5" type="ordered locus">LOC_Os03g04070</name>
    <name evidence="7" type="ORF">OsJ_09306</name>
</gene>
<reference key="1">
    <citation type="journal article" date="2005" name="Genome Res.">
        <title>Sequence, annotation, and analysis of synteny between rice chromosome 3 and diverged grass species.</title>
        <authorList>
            <consortium name="The rice chromosome 3 sequencing consortium"/>
            <person name="Buell C.R."/>
            <person name="Yuan Q."/>
            <person name="Ouyang S."/>
            <person name="Liu J."/>
            <person name="Zhu W."/>
            <person name="Wang A."/>
            <person name="Maiti R."/>
            <person name="Haas B."/>
            <person name="Wortman J."/>
            <person name="Pertea M."/>
            <person name="Jones K.M."/>
            <person name="Kim M."/>
            <person name="Overton L."/>
            <person name="Tsitrin T."/>
            <person name="Fadrosh D."/>
            <person name="Bera J."/>
            <person name="Weaver B."/>
            <person name="Jin S."/>
            <person name="Johri S."/>
            <person name="Reardon M."/>
            <person name="Webb K."/>
            <person name="Hill J."/>
            <person name="Moffat K."/>
            <person name="Tallon L."/>
            <person name="Van Aken S."/>
            <person name="Lewis M."/>
            <person name="Utterback T."/>
            <person name="Feldblyum T."/>
            <person name="Zismann V."/>
            <person name="Iobst S."/>
            <person name="Hsiao J."/>
            <person name="de Vazeille A.R."/>
            <person name="Salzberg S.L."/>
            <person name="White O."/>
            <person name="Fraser C.M."/>
            <person name="Yu Y."/>
            <person name="Kim H."/>
            <person name="Rambo T."/>
            <person name="Currie J."/>
            <person name="Collura K."/>
            <person name="Kernodle-Thompson S."/>
            <person name="Wei F."/>
            <person name="Kudrna K."/>
            <person name="Ammiraju J.S.S."/>
            <person name="Luo M."/>
            <person name="Goicoechea J.L."/>
            <person name="Wing R.A."/>
            <person name="Henry D."/>
            <person name="Oates R."/>
            <person name="Palmer M."/>
            <person name="Pries G."/>
            <person name="Saski C."/>
            <person name="Simmons J."/>
            <person name="Soderlund C."/>
            <person name="Nelson W."/>
            <person name="de la Bastide M."/>
            <person name="Spiegel L."/>
            <person name="Nascimento L."/>
            <person name="Huang E."/>
            <person name="Preston R."/>
            <person name="Zutavern T."/>
            <person name="Palmer L."/>
            <person name="O'Shaughnessy A."/>
            <person name="Dike S."/>
            <person name="McCombie W.R."/>
            <person name="Minx P."/>
            <person name="Cordum H."/>
            <person name="Wilson R."/>
            <person name="Jin W."/>
            <person name="Lee H.R."/>
            <person name="Jiang J."/>
            <person name="Jackson S."/>
        </authorList>
    </citation>
    <scope>NUCLEOTIDE SEQUENCE [LARGE SCALE GENOMIC DNA]</scope>
    <source>
        <strain>cv. Nipponbare</strain>
    </source>
</reference>
<reference key="2">
    <citation type="journal article" date="2005" name="Nature">
        <title>The map-based sequence of the rice genome.</title>
        <authorList>
            <consortium name="International rice genome sequencing project (IRGSP)"/>
        </authorList>
    </citation>
    <scope>NUCLEOTIDE SEQUENCE [LARGE SCALE GENOMIC DNA]</scope>
    <source>
        <strain>cv. Nipponbare</strain>
    </source>
</reference>
<reference key="3">
    <citation type="journal article" date="2008" name="Nucleic Acids Res.">
        <title>The rice annotation project database (RAP-DB): 2008 update.</title>
        <authorList>
            <consortium name="The rice annotation project (RAP)"/>
        </authorList>
    </citation>
    <scope>GENOME REANNOTATION</scope>
    <source>
        <strain>cv. Nipponbare</strain>
    </source>
</reference>
<reference key="4">
    <citation type="journal article" date="2013" name="Rice">
        <title>Improvement of the Oryza sativa Nipponbare reference genome using next generation sequence and optical map data.</title>
        <authorList>
            <person name="Kawahara Y."/>
            <person name="de la Bastide M."/>
            <person name="Hamilton J.P."/>
            <person name="Kanamori H."/>
            <person name="McCombie W.R."/>
            <person name="Ouyang S."/>
            <person name="Schwartz D.C."/>
            <person name="Tanaka T."/>
            <person name="Wu J."/>
            <person name="Zhou S."/>
            <person name="Childs K.L."/>
            <person name="Davidson R.M."/>
            <person name="Lin H."/>
            <person name="Quesada-Ocampo L."/>
            <person name="Vaillancourt B."/>
            <person name="Sakai H."/>
            <person name="Lee S.S."/>
            <person name="Kim J."/>
            <person name="Numa H."/>
            <person name="Itoh T."/>
            <person name="Buell C.R."/>
            <person name="Matsumoto T."/>
        </authorList>
    </citation>
    <scope>GENOME REANNOTATION</scope>
    <source>
        <strain>cv. Nipponbare</strain>
    </source>
</reference>
<reference key="5">
    <citation type="journal article" date="2005" name="PLoS Biol.">
        <title>The genomes of Oryza sativa: a history of duplications.</title>
        <authorList>
            <person name="Yu J."/>
            <person name="Wang J."/>
            <person name="Lin W."/>
            <person name="Li S."/>
            <person name="Li H."/>
            <person name="Zhou J."/>
            <person name="Ni P."/>
            <person name="Dong W."/>
            <person name="Hu S."/>
            <person name="Zeng C."/>
            <person name="Zhang J."/>
            <person name="Zhang Y."/>
            <person name="Li R."/>
            <person name="Xu Z."/>
            <person name="Li S."/>
            <person name="Li X."/>
            <person name="Zheng H."/>
            <person name="Cong L."/>
            <person name="Lin L."/>
            <person name="Yin J."/>
            <person name="Geng J."/>
            <person name="Li G."/>
            <person name="Shi J."/>
            <person name="Liu J."/>
            <person name="Lv H."/>
            <person name="Li J."/>
            <person name="Wang J."/>
            <person name="Deng Y."/>
            <person name="Ran L."/>
            <person name="Shi X."/>
            <person name="Wang X."/>
            <person name="Wu Q."/>
            <person name="Li C."/>
            <person name="Ren X."/>
            <person name="Wang J."/>
            <person name="Wang X."/>
            <person name="Li D."/>
            <person name="Liu D."/>
            <person name="Zhang X."/>
            <person name="Ji Z."/>
            <person name="Zhao W."/>
            <person name="Sun Y."/>
            <person name="Zhang Z."/>
            <person name="Bao J."/>
            <person name="Han Y."/>
            <person name="Dong L."/>
            <person name="Ji J."/>
            <person name="Chen P."/>
            <person name="Wu S."/>
            <person name="Liu J."/>
            <person name="Xiao Y."/>
            <person name="Bu D."/>
            <person name="Tan J."/>
            <person name="Yang L."/>
            <person name="Ye C."/>
            <person name="Zhang J."/>
            <person name="Xu J."/>
            <person name="Zhou Y."/>
            <person name="Yu Y."/>
            <person name="Zhang B."/>
            <person name="Zhuang S."/>
            <person name="Wei H."/>
            <person name="Liu B."/>
            <person name="Lei M."/>
            <person name="Yu H."/>
            <person name="Li Y."/>
            <person name="Xu H."/>
            <person name="Wei S."/>
            <person name="He X."/>
            <person name="Fang L."/>
            <person name="Zhang Z."/>
            <person name="Zhang Y."/>
            <person name="Huang X."/>
            <person name="Su Z."/>
            <person name="Tong W."/>
            <person name="Li J."/>
            <person name="Tong Z."/>
            <person name="Li S."/>
            <person name="Ye J."/>
            <person name="Wang L."/>
            <person name="Fang L."/>
            <person name="Lei T."/>
            <person name="Chen C.-S."/>
            <person name="Chen H.-C."/>
            <person name="Xu Z."/>
            <person name="Li H."/>
            <person name="Huang H."/>
            <person name="Zhang F."/>
            <person name="Xu H."/>
            <person name="Li N."/>
            <person name="Zhao C."/>
            <person name="Li S."/>
            <person name="Dong L."/>
            <person name="Huang Y."/>
            <person name="Li L."/>
            <person name="Xi Y."/>
            <person name="Qi Q."/>
            <person name="Li W."/>
            <person name="Zhang B."/>
            <person name="Hu W."/>
            <person name="Zhang Y."/>
            <person name="Tian X."/>
            <person name="Jiao Y."/>
            <person name="Liang X."/>
            <person name="Jin J."/>
            <person name="Gao L."/>
            <person name="Zheng W."/>
            <person name="Hao B."/>
            <person name="Liu S.-M."/>
            <person name="Wang W."/>
            <person name="Yuan L."/>
            <person name="Cao M."/>
            <person name="McDermott J."/>
            <person name="Samudrala R."/>
            <person name="Wang J."/>
            <person name="Wong G.K.-S."/>
            <person name="Yang H."/>
        </authorList>
    </citation>
    <scope>NUCLEOTIDE SEQUENCE [LARGE SCALE GENOMIC DNA]</scope>
    <source>
        <strain>cv. Nipponbare</strain>
    </source>
</reference>
<reference key="6">
    <citation type="journal article" date="2003" name="DNA Res.">
        <title>Comprehensive analysis of NAC family genes in Oryza sativa and Arabidopsis thaliana.</title>
        <authorList>
            <person name="Ooka H."/>
            <person name="Satoh K."/>
            <person name="Doi K."/>
            <person name="Nagata T."/>
            <person name="Otomo Y."/>
            <person name="Murakami K."/>
            <person name="Matsubara K."/>
            <person name="Osato N."/>
            <person name="Kawai J."/>
            <person name="Carninci P."/>
            <person name="Hayashizaki Y."/>
            <person name="Suzuki K."/>
            <person name="Kojima K."/>
            <person name="Takahara Y."/>
            <person name="Yamamoto K."/>
            <person name="Kikuchi S."/>
        </authorList>
    </citation>
    <scope>GENE FAMILY</scope>
    <scope>NOMENCLATURE</scope>
</reference>
<reference key="7">
    <citation type="journal article" date="2016" name="Front. Plant Sci.">
        <title>Overexpression of a stress-responsive nac transcription factor gene ONAC022 improves drought and salt tolerance in rice.</title>
        <authorList>
            <person name="Hong Y."/>
            <person name="Zhang H."/>
            <person name="Huang L."/>
            <person name="Li D."/>
            <person name="Song F."/>
        </authorList>
    </citation>
    <scope>FUNCTION</scope>
    <scope>SUBCELLULAR LOCATION</scope>
    <scope>INDUCTION</scope>
</reference>
<comment type="function">
    <text evidence="3">Transcription activator that binds sequence-specific DNA motifs. Involved in stress response. Plays a positive role in drought and salt stress tolerance through the modulation of abscisic acid-mediated signaling.</text>
</comment>
<comment type="subcellular location">
    <subcellularLocation>
        <location evidence="1 3">Nucleus</location>
    </subcellularLocation>
</comment>
<comment type="induction">
    <text evidence="3">Induced by drought stress, salt stress and abscisic acid (ABA).</text>
</comment>
<comment type="domain">
    <text evidence="1">The NAC domain includes a DNA binding domain and a dimerization domain.</text>
</comment>
<comment type="miscellaneous">
    <text evidence="3">Plants overexpressing NAC022 exhibit enhanced tolerance to drought stress and salt stress.</text>
</comment>